<comment type="function">
    <text evidence="1">Catalyzes the ATP-dependent transfer of a sulfur to tRNA to produce 4-thiouridine in position 8 of tRNAs, which functions as a near-UV photosensor. Also catalyzes the transfer of sulfur to the sulfur carrier protein ThiS, forming ThiS-thiocarboxylate. This is a step in the synthesis of thiazole, in the thiamine biosynthesis pathway. The sulfur is donated as persulfide by IscS.</text>
</comment>
<comment type="catalytic activity">
    <reaction evidence="1">
        <text>[ThiI sulfur-carrier protein]-S-sulfanyl-L-cysteine + a uridine in tRNA + 2 reduced [2Fe-2S]-[ferredoxin] + ATP + H(+) = [ThiI sulfur-carrier protein]-L-cysteine + a 4-thiouridine in tRNA + 2 oxidized [2Fe-2S]-[ferredoxin] + AMP + diphosphate</text>
        <dbReference type="Rhea" id="RHEA:24176"/>
        <dbReference type="Rhea" id="RHEA-COMP:10000"/>
        <dbReference type="Rhea" id="RHEA-COMP:10001"/>
        <dbReference type="Rhea" id="RHEA-COMP:13337"/>
        <dbReference type="Rhea" id="RHEA-COMP:13338"/>
        <dbReference type="Rhea" id="RHEA-COMP:13339"/>
        <dbReference type="Rhea" id="RHEA-COMP:13340"/>
        <dbReference type="ChEBI" id="CHEBI:15378"/>
        <dbReference type="ChEBI" id="CHEBI:29950"/>
        <dbReference type="ChEBI" id="CHEBI:30616"/>
        <dbReference type="ChEBI" id="CHEBI:33019"/>
        <dbReference type="ChEBI" id="CHEBI:33737"/>
        <dbReference type="ChEBI" id="CHEBI:33738"/>
        <dbReference type="ChEBI" id="CHEBI:61963"/>
        <dbReference type="ChEBI" id="CHEBI:65315"/>
        <dbReference type="ChEBI" id="CHEBI:136798"/>
        <dbReference type="ChEBI" id="CHEBI:456215"/>
        <dbReference type="EC" id="2.8.1.4"/>
    </reaction>
</comment>
<comment type="catalytic activity">
    <reaction evidence="1">
        <text>[ThiS sulfur-carrier protein]-C-terminal Gly-Gly-AMP + S-sulfanyl-L-cysteinyl-[cysteine desulfurase] + AH2 = [ThiS sulfur-carrier protein]-C-terminal-Gly-aminoethanethioate + L-cysteinyl-[cysteine desulfurase] + A + AMP + 2 H(+)</text>
        <dbReference type="Rhea" id="RHEA:43340"/>
        <dbReference type="Rhea" id="RHEA-COMP:12157"/>
        <dbReference type="Rhea" id="RHEA-COMP:12158"/>
        <dbReference type="Rhea" id="RHEA-COMP:12910"/>
        <dbReference type="Rhea" id="RHEA-COMP:19908"/>
        <dbReference type="ChEBI" id="CHEBI:13193"/>
        <dbReference type="ChEBI" id="CHEBI:15378"/>
        <dbReference type="ChEBI" id="CHEBI:17499"/>
        <dbReference type="ChEBI" id="CHEBI:29950"/>
        <dbReference type="ChEBI" id="CHEBI:61963"/>
        <dbReference type="ChEBI" id="CHEBI:90618"/>
        <dbReference type="ChEBI" id="CHEBI:232372"/>
        <dbReference type="ChEBI" id="CHEBI:456215"/>
    </reaction>
</comment>
<comment type="pathway">
    <text evidence="1">Cofactor biosynthesis; thiamine diphosphate biosynthesis.</text>
</comment>
<comment type="subcellular location">
    <subcellularLocation>
        <location evidence="1">Cytoplasm</location>
    </subcellularLocation>
</comment>
<comment type="similarity">
    <text evidence="1">Belongs to the ThiI family.</text>
</comment>
<keyword id="KW-0067">ATP-binding</keyword>
<keyword id="KW-0963">Cytoplasm</keyword>
<keyword id="KW-1015">Disulfide bond</keyword>
<keyword id="KW-0547">Nucleotide-binding</keyword>
<keyword id="KW-0676">Redox-active center</keyword>
<keyword id="KW-0694">RNA-binding</keyword>
<keyword id="KW-0784">Thiamine biosynthesis</keyword>
<keyword id="KW-0808">Transferase</keyword>
<keyword id="KW-0820">tRNA-binding</keyword>
<evidence type="ECO:0000255" key="1">
    <source>
        <dbReference type="HAMAP-Rule" id="MF_00021"/>
    </source>
</evidence>
<sequence>MKFIIKLFPEITIKSQSVRLRFIKILTGNIRNVLKHYDETLAVVRHWDNIEVRAKDENQRLAIRDALTRIPGIHHILEVEDVPFTDMHDIFEKALAQYREQLEGKTFCVRVKRRGKHEFSSIEVERYVGGGLNQHIESARVKLTNPDVTVHLEVEDDRLLLIKGRYEGIGGFPIGTQEDVLSLISGGFDSGVSSYMLMRRGCRVHYCFFNLGGAAHEIGVRQVAHYLWNRFGSSHRVRFVAINFEPVVGEILEKVDDGQMGVVLKRMMVRAASKVAERYGVQALVTGEALGQVSSQTLTNLRLIDNVSDTLILRPLISYDKGHIINLARQIGTEDFARTMPEYCGVISKSPTVKAIKAKIEAEEENFDFSILDKVVEEANNVDIREIAQQTQQEVVEVETVSGFGPNDVILDIRSVDEQDDKPLKVEGVDVVSLPFYKLSTKFGDLDQSKTWLLWCERGVMSRLQALYLREQGFANVKVYRP</sequence>
<gene>
    <name evidence="1" type="primary">thiI</name>
    <name type="ordered locus">SCH_0466</name>
</gene>
<dbReference type="EC" id="2.8.1.4" evidence="1"/>
<dbReference type="EMBL" id="AE017220">
    <property type="protein sequence ID" value="AAX64372.1"/>
    <property type="molecule type" value="Genomic_DNA"/>
</dbReference>
<dbReference type="RefSeq" id="WP_001539301.1">
    <property type="nucleotide sequence ID" value="NC_006905.1"/>
</dbReference>
<dbReference type="SMR" id="Q57SD9"/>
<dbReference type="KEGG" id="sec:SCH_0466"/>
<dbReference type="HOGENOM" id="CLU_037952_4_1_6"/>
<dbReference type="UniPathway" id="UPA00060"/>
<dbReference type="Proteomes" id="UP000000538">
    <property type="component" value="Chromosome"/>
</dbReference>
<dbReference type="GO" id="GO:0005829">
    <property type="term" value="C:cytosol"/>
    <property type="evidence" value="ECO:0007669"/>
    <property type="project" value="TreeGrafter"/>
</dbReference>
<dbReference type="GO" id="GO:0005524">
    <property type="term" value="F:ATP binding"/>
    <property type="evidence" value="ECO:0007669"/>
    <property type="project" value="UniProtKB-UniRule"/>
</dbReference>
<dbReference type="GO" id="GO:0004810">
    <property type="term" value="F:CCA tRNA nucleotidyltransferase activity"/>
    <property type="evidence" value="ECO:0007669"/>
    <property type="project" value="InterPro"/>
</dbReference>
<dbReference type="GO" id="GO:0000049">
    <property type="term" value="F:tRNA binding"/>
    <property type="evidence" value="ECO:0007669"/>
    <property type="project" value="UniProtKB-UniRule"/>
</dbReference>
<dbReference type="GO" id="GO:0140741">
    <property type="term" value="F:tRNA-uracil-4 sulfurtransferase activity"/>
    <property type="evidence" value="ECO:0007669"/>
    <property type="project" value="UniProtKB-EC"/>
</dbReference>
<dbReference type="GO" id="GO:0009228">
    <property type="term" value="P:thiamine biosynthetic process"/>
    <property type="evidence" value="ECO:0007669"/>
    <property type="project" value="UniProtKB-KW"/>
</dbReference>
<dbReference type="GO" id="GO:0009229">
    <property type="term" value="P:thiamine diphosphate biosynthetic process"/>
    <property type="evidence" value="ECO:0007669"/>
    <property type="project" value="UniProtKB-UniRule"/>
</dbReference>
<dbReference type="GO" id="GO:0052837">
    <property type="term" value="P:thiazole biosynthetic process"/>
    <property type="evidence" value="ECO:0007669"/>
    <property type="project" value="InterPro"/>
</dbReference>
<dbReference type="GO" id="GO:0002937">
    <property type="term" value="P:tRNA 4-thiouridine biosynthesis"/>
    <property type="evidence" value="ECO:0007669"/>
    <property type="project" value="TreeGrafter"/>
</dbReference>
<dbReference type="CDD" id="cd01712">
    <property type="entry name" value="PPase_ThiI"/>
    <property type="match status" value="1"/>
</dbReference>
<dbReference type="CDD" id="cd00158">
    <property type="entry name" value="RHOD"/>
    <property type="match status" value="1"/>
</dbReference>
<dbReference type="CDD" id="cd11716">
    <property type="entry name" value="THUMP_ThiI"/>
    <property type="match status" value="1"/>
</dbReference>
<dbReference type="FunFam" id="3.30.2130.30:FF:000002">
    <property type="entry name" value="tRNA sulfurtransferase"/>
    <property type="match status" value="1"/>
</dbReference>
<dbReference type="FunFam" id="3.40.250.10:FF:000003">
    <property type="entry name" value="tRNA sulfurtransferase"/>
    <property type="match status" value="1"/>
</dbReference>
<dbReference type="FunFam" id="3.40.50.620:FF:000029">
    <property type="entry name" value="tRNA sulfurtransferase"/>
    <property type="match status" value="1"/>
</dbReference>
<dbReference type="Gene3D" id="3.30.2130.30">
    <property type="match status" value="1"/>
</dbReference>
<dbReference type="Gene3D" id="3.40.50.620">
    <property type="entry name" value="HUPs"/>
    <property type="match status" value="1"/>
</dbReference>
<dbReference type="Gene3D" id="3.40.250.10">
    <property type="entry name" value="Rhodanese-like domain"/>
    <property type="match status" value="1"/>
</dbReference>
<dbReference type="HAMAP" id="MF_00021">
    <property type="entry name" value="ThiI"/>
    <property type="match status" value="1"/>
</dbReference>
<dbReference type="InterPro" id="IPR001763">
    <property type="entry name" value="Rhodanese-like_dom"/>
</dbReference>
<dbReference type="InterPro" id="IPR036873">
    <property type="entry name" value="Rhodanese-like_dom_sf"/>
</dbReference>
<dbReference type="InterPro" id="IPR014729">
    <property type="entry name" value="Rossmann-like_a/b/a_fold"/>
</dbReference>
<dbReference type="InterPro" id="IPR020536">
    <property type="entry name" value="ThiI_AANH"/>
</dbReference>
<dbReference type="InterPro" id="IPR054173">
    <property type="entry name" value="ThiI_fer"/>
</dbReference>
<dbReference type="InterPro" id="IPR049961">
    <property type="entry name" value="ThiI_N"/>
</dbReference>
<dbReference type="InterPro" id="IPR026340">
    <property type="entry name" value="THII_Thiazole_biosynth_dom"/>
</dbReference>
<dbReference type="InterPro" id="IPR004114">
    <property type="entry name" value="THUMP_dom"/>
</dbReference>
<dbReference type="InterPro" id="IPR049962">
    <property type="entry name" value="THUMP_ThiI"/>
</dbReference>
<dbReference type="InterPro" id="IPR003720">
    <property type="entry name" value="tRNA_STrfase"/>
</dbReference>
<dbReference type="InterPro" id="IPR050102">
    <property type="entry name" value="tRNA_sulfurtransferase_ThiI"/>
</dbReference>
<dbReference type="NCBIfam" id="TIGR04271">
    <property type="entry name" value="ThiI_C_thiazole"/>
    <property type="match status" value="1"/>
</dbReference>
<dbReference type="NCBIfam" id="TIGR00342">
    <property type="entry name" value="tRNA uracil 4-sulfurtransferase ThiI"/>
    <property type="match status" value="1"/>
</dbReference>
<dbReference type="PANTHER" id="PTHR43209">
    <property type="entry name" value="TRNA SULFURTRANSFERASE"/>
    <property type="match status" value="1"/>
</dbReference>
<dbReference type="PANTHER" id="PTHR43209:SF1">
    <property type="entry name" value="TRNA SULFURTRANSFERASE"/>
    <property type="match status" value="1"/>
</dbReference>
<dbReference type="Pfam" id="PF02568">
    <property type="entry name" value="ThiI"/>
    <property type="match status" value="1"/>
</dbReference>
<dbReference type="Pfam" id="PF22025">
    <property type="entry name" value="ThiI_fer"/>
    <property type="match status" value="1"/>
</dbReference>
<dbReference type="Pfam" id="PF02926">
    <property type="entry name" value="THUMP"/>
    <property type="match status" value="1"/>
</dbReference>
<dbReference type="SMART" id="SM00981">
    <property type="entry name" value="THUMP"/>
    <property type="match status" value="1"/>
</dbReference>
<dbReference type="SUPFAM" id="SSF52402">
    <property type="entry name" value="Adenine nucleotide alpha hydrolases-like"/>
    <property type="match status" value="1"/>
</dbReference>
<dbReference type="SUPFAM" id="SSF52821">
    <property type="entry name" value="Rhodanese/Cell cycle control phosphatase"/>
    <property type="match status" value="1"/>
</dbReference>
<dbReference type="SUPFAM" id="SSF143437">
    <property type="entry name" value="THUMP domain-like"/>
    <property type="match status" value="1"/>
</dbReference>
<dbReference type="PROSITE" id="PS50206">
    <property type="entry name" value="RHODANESE_3"/>
    <property type="match status" value="1"/>
</dbReference>
<dbReference type="PROSITE" id="PS51165">
    <property type="entry name" value="THUMP"/>
    <property type="match status" value="1"/>
</dbReference>
<protein>
    <recommendedName>
        <fullName evidence="1">tRNA sulfurtransferase</fullName>
        <ecNumber evidence="1">2.8.1.4</ecNumber>
    </recommendedName>
    <alternativeName>
        <fullName evidence="1">Sulfur carrier protein ThiS sulfurtransferase</fullName>
    </alternativeName>
    <alternativeName>
        <fullName evidence="1">Thiamine biosynthesis protein ThiI</fullName>
    </alternativeName>
    <alternativeName>
        <fullName evidence="1">tRNA 4-thiouridine synthase</fullName>
    </alternativeName>
</protein>
<reference key="1">
    <citation type="journal article" date="2005" name="Nucleic Acids Res.">
        <title>The genome sequence of Salmonella enterica serovar Choleraesuis, a highly invasive and resistant zoonotic pathogen.</title>
        <authorList>
            <person name="Chiu C.-H."/>
            <person name="Tang P."/>
            <person name="Chu C."/>
            <person name="Hu S."/>
            <person name="Bao Q."/>
            <person name="Yu J."/>
            <person name="Chou Y.-Y."/>
            <person name="Wang H.-S."/>
            <person name="Lee Y.-S."/>
        </authorList>
    </citation>
    <scope>NUCLEOTIDE SEQUENCE [LARGE SCALE GENOMIC DNA]</scope>
    <source>
        <strain>SC-B67</strain>
    </source>
</reference>
<feature type="chain" id="PRO_1000074258" description="tRNA sulfurtransferase">
    <location>
        <begin position="1"/>
        <end position="482"/>
    </location>
</feature>
<feature type="domain" description="THUMP" evidence="1">
    <location>
        <begin position="61"/>
        <end position="165"/>
    </location>
</feature>
<feature type="domain" description="Rhodanese" evidence="1">
    <location>
        <begin position="404"/>
        <end position="482"/>
    </location>
</feature>
<feature type="active site" description="Cysteine persulfide intermediate" evidence="1">
    <location>
        <position position="456"/>
    </location>
</feature>
<feature type="binding site" evidence="1">
    <location>
        <begin position="183"/>
        <end position="184"/>
    </location>
    <ligand>
        <name>ATP</name>
        <dbReference type="ChEBI" id="CHEBI:30616"/>
    </ligand>
</feature>
<feature type="binding site" evidence="1">
    <location>
        <position position="265"/>
    </location>
    <ligand>
        <name>ATP</name>
        <dbReference type="ChEBI" id="CHEBI:30616"/>
    </ligand>
</feature>
<feature type="binding site" evidence="1">
    <location>
        <position position="287"/>
    </location>
    <ligand>
        <name>ATP</name>
        <dbReference type="ChEBI" id="CHEBI:30616"/>
    </ligand>
</feature>
<feature type="binding site" evidence="1">
    <location>
        <position position="296"/>
    </location>
    <ligand>
        <name>ATP</name>
        <dbReference type="ChEBI" id="CHEBI:30616"/>
    </ligand>
</feature>
<feature type="disulfide bond" description="Redox-active" evidence="1">
    <location>
        <begin position="344"/>
        <end position="456"/>
    </location>
</feature>
<proteinExistence type="inferred from homology"/>
<name>THII_SALCH</name>
<organism>
    <name type="scientific">Salmonella choleraesuis (strain SC-B67)</name>
    <dbReference type="NCBI Taxonomy" id="321314"/>
    <lineage>
        <taxon>Bacteria</taxon>
        <taxon>Pseudomonadati</taxon>
        <taxon>Pseudomonadota</taxon>
        <taxon>Gammaproteobacteria</taxon>
        <taxon>Enterobacterales</taxon>
        <taxon>Enterobacteriaceae</taxon>
        <taxon>Salmonella</taxon>
    </lineage>
</organism>
<accession>Q57SD9</accession>